<proteinExistence type="inferred from homology"/>
<reference key="1">
    <citation type="journal article" date="2005" name="Science">
        <title>The genome of the basidiomycetous yeast and human pathogen Cryptococcus neoformans.</title>
        <authorList>
            <person name="Loftus B.J."/>
            <person name="Fung E."/>
            <person name="Roncaglia P."/>
            <person name="Rowley D."/>
            <person name="Amedeo P."/>
            <person name="Bruno D."/>
            <person name="Vamathevan J."/>
            <person name="Miranda M."/>
            <person name="Anderson I.J."/>
            <person name="Fraser J.A."/>
            <person name="Allen J.E."/>
            <person name="Bosdet I.E."/>
            <person name="Brent M.R."/>
            <person name="Chiu R."/>
            <person name="Doering T.L."/>
            <person name="Donlin M.J."/>
            <person name="D'Souza C.A."/>
            <person name="Fox D.S."/>
            <person name="Grinberg V."/>
            <person name="Fu J."/>
            <person name="Fukushima M."/>
            <person name="Haas B.J."/>
            <person name="Huang J.C."/>
            <person name="Janbon G."/>
            <person name="Jones S.J.M."/>
            <person name="Koo H.L."/>
            <person name="Krzywinski M.I."/>
            <person name="Kwon-Chung K.J."/>
            <person name="Lengeler K.B."/>
            <person name="Maiti R."/>
            <person name="Marra M.A."/>
            <person name="Marra R.E."/>
            <person name="Mathewson C.A."/>
            <person name="Mitchell T.G."/>
            <person name="Pertea M."/>
            <person name="Riggs F.R."/>
            <person name="Salzberg S.L."/>
            <person name="Schein J.E."/>
            <person name="Shvartsbeyn A."/>
            <person name="Shin H."/>
            <person name="Shumway M."/>
            <person name="Specht C.A."/>
            <person name="Suh B.B."/>
            <person name="Tenney A."/>
            <person name="Utterback T.R."/>
            <person name="Wickes B.L."/>
            <person name="Wortman J.R."/>
            <person name="Wye N.H."/>
            <person name="Kronstad J.W."/>
            <person name="Lodge J.K."/>
            <person name="Heitman J."/>
            <person name="Davis R.W."/>
            <person name="Fraser C.M."/>
            <person name="Hyman R.W."/>
        </authorList>
    </citation>
    <scope>NUCLEOTIDE SEQUENCE [LARGE SCALE GENOMIC DNA]</scope>
    <source>
        <strain>JEC21 / ATCC MYA-565</strain>
    </source>
</reference>
<comment type="function">
    <text evidence="1">Involved in pre-mRNA splicing.</text>
</comment>
<comment type="subunit">
    <text evidence="1">Associated with the spliceosome.</text>
</comment>
<comment type="subcellular location">
    <subcellularLocation>
        <location evidence="1">Cytoplasm</location>
    </subcellularLocation>
    <subcellularLocation>
        <location evidence="1">Nucleus</location>
    </subcellularLocation>
</comment>
<comment type="similarity">
    <text evidence="4">Belongs to the CWC22 family.</text>
</comment>
<gene>
    <name type="primary">CWC22</name>
    <name type="ordered locus">CNF00260</name>
</gene>
<protein>
    <recommendedName>
        <fullName>Pre-mRNA-splicing factor CWC22</fullName>
    </recommendedName>
</protein>
<keyword id="KW-0963">Cytoplasm</keyword>
<keyword id="KW-0507">mRNA processing</keyword>
<keyword id="KW-0508">mRNA splicing</keyword>
<keyword id="KW-0539">Nucleus</keyword>
<keyword id="KW-1185">Reference proteome</keyword>
<keyword id="KW-0747">Spliceosome</keyword>
<dbReference type="EMBL" id="AE017346">
    <property type="protein sequence ID" value="AAW44142.1"/>
    <property type="molecule type" value="Genomic_DNA"/>
</dbReference>
<dbReference type="RefSeq" id="XP_571449.1">
    <property type="nucleotide sequence ID" value="XM_571449.1"/>
</dbReference>
<dbReference type="SMR" id="P0CM96"/>
<dbReference type="FunCoup" id="P0CM96">
    <property type="interactions" value="768"/>
</dbReference>
<dbReference type="STRING" id="214684.P0CM96"/>
<dbReference type="PaxDb" id="214684-P0CM96"/>
<dbReference type="EnsemblFungi" id="AAW44142">
    <property type="protein sequence ID" value="AAW44142"/>
    <property type="gene ID" value="CNF00260"/>
</dbReference>
<dbReference type="GeneID" id="3258354"/>
<dbReference type="KEGG" id="cne:CNF00260"/>
<dbReference type="VEuPathDB" id="FungiDB:CNF00260"/>
<dbReference type="eggNOG" id="KOG2140">
    <property type="taxonomic scope" value="Eukaryota"/>
</dbReference>
<dbReference type="HOGENOM" id="CLU_006308_0_0_1"/>
<dbReference type="InParanoid" id="P0CM96"/>
<dbReference type="OMA" id="ILTEDMR"/>
<dbReference type="OrthoDB" id="1924287at2759"/>
<dbReference type="Proteomes" id="UP000002149">
    <property type="component" value="Chromosome 6"/>
</dbReference>
<dbReference type="GO" id="GO:0071013">
    <property type="term" value="C:catalytic step 2 spliceosome"/>
    <property type="evidence" value="ECO:0000318"/>
    <property type="project" value="GO_Central"/>
</dbReference>
<dbReference type="GO" id="GO:0005737">
    <property type="term" value="C:cytoplasm"/>
    <property type="evidence" value="ECO:0007669"/>
    <property type="project" value="UniProtKB-SubCell"/>
</dbReference>
<dbReference type="GO" id="GO:0003723">
    <property type="term" value="F:RNA binding"/>
    <property type="evidence" value="ECO:0000318"/>
    <property type="project" value="GO_Central"/>
</dbReference>
<dbReference type="GO" id="GO:0000398">
    <property type="term" value="P:mRNA splicing, via spliceosome"/>
    <property type="evidence" value="ECO:0000318"/>
    <property type="project" value="GO_Central"/>
</dbReference>
<dbReference type="FunFam" id="1.25.40.180:FF:000004">
    <property type="entry name" value="pre-mRNA-splicing factor CWC22 homolog"/>
    <property type="match status" value="1"/>
</dbReference>
<dbReference type="Gene3D" id="1.25.40.180">
    <property type="match status" value="2"/>
</dbReference>
<dbReference type="InterPro" id="IPR016024">
    <property type="entry name" value="ARM-type_fold"/>
</dbReference>
<dbReference type="InterPro" id="IPR050781">
    <property type="entry name" value="CWC22_splicing_factor"/>
</dbReference>
<dbReference type="InterPro" id="IPR003891">
    <property type="entry name" value="Initiation_fac_eIF4g_MI"/>
</dbReference>
<dbReference type="InterPro" id="IPR003890">
    <property type="entry name" value="MIF4G-like_typ-3"/>
</dbReference>
<dbReference type="PANTHER" id="PTHR18034">
    <property type="entry name" value="CELL CYCLE CONTROL PROTEIN CWF22-RELATED"/>
    <property type="match status" value="1"/>
</dbReference>
<dbReference type="PANTHER" id="PTHR18034:SF3">
    <property type="entry name" value="PRE-MRNA-SPLICING FACTOR CWC22 HOMOLOG"/>
    <property type="match status" value="1"/>
</dbReference>
<dbReference type="Pfam" id="PF02847">
    <property type="entry name" value="MA3"/>
    <property type="match status" value="1"/>
</dbReference>
<dbReference type="Pfam" id="PF02854">
    <property type="entry name" value="MIF4G"/>
    <property type="match status" value="1"/>
</dbReference>
<dbReference type="SMART" id="SM00544">
    <property type="entry name" value="MA3"/>
    <property type="match status" value="1"/>
</dbReference>
<dbReference type="SMART" id="SM00543">
    <property type="entry name" value="MIF4G"/>
    <property type="match status" value="1"/>
</dbReference>
<dbReference type="SUPFAM" id="SSF48371">
    <property type="entry name" value="ARM repeat"/>
    <property type="match status" value="1"/>
</dbReference>
<dbReference type="PROSITE" id="PS51366">
    <property type="entry name" value="MI"/>
    <property type="match status" value="1"/>
</dbReference>
<evidence type="ECO:0000250" key="1"/>
<evidence type="ECO:0000255" key="2">
    <source>
        <dbReference type="PROSITE-ProRule" id="PRU00698"/>
    </source>
</evidence>
<evidence type="ECO:0000256" key="3">
    <source>
        <dbReference type="SAM" id="MobiDB-lite"/>
    </source>
</evidence>
<evidence type="ECO:0000305" key="4"/>
<feature type="chain" id="PRO_0000215670" description="Pre-mRNA-splicing factor CWC22">
    <location>
        <begin position="1"/>
        <end position="831"/>
    </location>
</feature>
<feature type="domain" description="MIF4G" evidence="2">
    <location>
        <begin position="174"/>
        <end position="357"/>
    </location>
</feature>
<feature type="domain" description="MI" evidence="2">
    <location>
        <begin position="460"/>
        <end position="576"/>
    </location>
</feature>
<feature type="region of interest" description="Disordered" evidence="3">
    <location>
        <begin position="1"/>
        <end position="89"/>
    </location>
</feature>
<feature type="region of interest" description="Disordered" evidence="3">
    <location>
        <begin position="414"/>
        <end position="450"/>
    </location>
</feature>
<feature type="region of interest" description="Disordered" evidence="3">
    <location>
        <begin position="670"/>
        <end position="831"/>
    </location>
</feature>
<feature type="compositionally biased region" description="Low complexity" evidence="3">
    <location>
        <begin position="1"/>
        <end position="17"/>
    </location>
</feature>
<feature type="compositionally biased region" description="Basic and acidic residues" evidence="3">
    <location>
        <begin position="73"/>
        <end position="89"/>
    </location>
</feature>
<feature type="compositionally biased region" description="Acidic residues" evidence="3">
    <location>
        <begin position="433"/>
        <end position="443"/>
    </location>
</feature>
<name>CWC22_CRYNJ</name>
<sequence>MPRSLSRSVSPRPRSPSLSPPRPDSRSSRGRSLTPDDIPAYKRKRSPSPNPRDRPASPPTRRRRSQSPYRNSNRAEIDRPNVKDIDPNRRRARENALLEKQINMALADDGDADGTVATTKKSADEIARAEFAKLLGSRSGGAYIPPAKLRAMQAEAAKDKTSAEYQRISWDALKKSINGLINKVNISNIKHIVPELFGENLIRGRGLFARSVMRAQASSLPFTPVFAALVAIINTKLPQVGELVLIRLISQFRRAYKRNDKTVCHATSTFIAHLCNQYVAHEIVALQILLLCLDRPTDDSIEVAVGFMREVGQFLSENSPKANNTVFERFRAVLHEGQISKRCQYMIEVLFQVRKDKYKDNPAVPEGLDLVEEEEQITHRVTLDDELQVQESLNLFKADPNFVQNEERYNAIKREILGDSDDESGTESGSEYSESEDDEDEDVAPEKAGIQDMTETNLINLRRTIYLTIMNSLNFEEAVHKLMKVNIPEGREIELCNMVIECCSQERTYSNFYGLIGERFCKLHRIWTDAFQEAFQKYYDTIHRYETNKLRNIGRFFGHLLASDGISWAVLHVVHMNEEETTSSSRIFVKIVLQEMVEEMGINRVAERFRIPDLKPAFAGMFPMDNPKNARFSINYFTSIGMGKVTEDMREYLQNAPKLLAAQQAALAAAESSDSDTDSSSDISSSSDSDSDTDSDASSYSRRSRRRRYSSDSRSPPPRRRRYSSDSRSPSPPPRRRQYSDEPRSPSPPPRRRRYSDDSRSPSPPPRRRYSGDSRSPSPPPRRRYADDSRSPSPPPHRRRYSDDSRSPSPPPRRRRYSDNSRSPSPPPRRR</sequence>
<organism>
    <name type="scientific">Cryptococcus neoformans var. neoformans serotype D (strain JEC21 / ATCC MYA-565)</name>
    <name type="common">Filobasidiella neoformans</name>
    <dbReference type="NCBI Taxonomy" id="214684"/>
    <lineage>
        <taxon>Eukaryota</taxon>
        <taxon>Fungi</taxon>
        <taxon>Dikarya</taxon>
        <taxon>Basidiomycota</taxon>
        <taxon>Agaricomycotina</taxon>
        <taxon>Tremellomycetes</taxon>
        <taxon>Tremellales</taxon>
        <taxon>Cryptococcaceae</taxon>
        <taxon>Cryptococcus</taxon>
        <taxon>Cryptococcus neoformans species complex</taxon>
    </lineage>
</organism>
<accession>P0CM96</accession>
<accession>Q55Q93</accession>
<accession>Q5KFX4</accession>